<organism>
    <name type="scientific">Sodalis glossinidius (strain morsitans)</name>
    <dbReference type="NCBI Taxonomy" id="343509"/>
    <lineage>
        <taxon>Bacteria</taxon>
        <taxon>Pseudomonadati</taxon>
        <taxon>Pseudomonadota</taxon>
        <taxon>Gammaproteobacteria</taxon>
        <taxon>Enterobacterales</taxon>
        <taxon>Bruguierivoracaceae</taxon>
        <taxon>Sodalis</taxon>
    </lineage>
</organism>
<keyword id="KW-0012">Acyltransferase</keyword>
<keyword id="KW-0998">Cell outer membrane</keyword>
<keyword id="KW-0472">Membrane</keyword>
<keyword id="KW-0732">Signal</keyword>
<keyword id="KW-0808">Transferase</keyword>
<evidence type="ECO:0000255" key="1">
    <source>
        <dbReference type="HAMAP-Rule" id="MF_00837"/>
    </source>
</evidence>
<dbReference type="EC" id="2.3.1.251" evidence="1"/>
<dbReference type="EMBL" id="AP008232">
    <property type="protein sequence ID" value="BAE74852.1"/>
    <property type="molecule type" value="Genomic_DNA"/>
</dbReference>
<dbReference type="SMR" id="Q2NSM3"/>
<dbReference type="STRING" id="343509.SG1577"/>
<dbReference type="KEGG" id="sgl:SG1577"/>
<dbReference type="eggNOG" id="ENOG502Z7SY">
    <property type="taxonomic scope" value="Bacteria"/>
</dbReference>
<dbReference type="HOGENOM" id="CLU_104099_0_0_6"/>
<dbReference type="OrthoDB" id="9156803at2"/>
<dbReference type="Proteomes" id="UP000001932">
    <property type="component" value="Chromosome"/>
</dbReference>
<dbReference type="GO" id="GO:0009279">
    <property type="term" value="C:cell outer membrane"/>
    <property type="evidence" value="ECO:0007669"/>
    <property type="project" value="UniProtKB-SubCell"/>
</dbReference>
<dbReference type="GO" id="GO:0016746">
    <property type="term" value="F:acyltransferase activity"/>
    <property type="evidence" value="ECO:0007669"/>
    <property type="project" value="UniProtKB-UniRule"/>
</dbReference>
<dbReference type="GO" id="GO:0009245">
    <property type="term" value="P:lipid A biosynthetic process"/>
    <property type="evidence" value="ECO:0007669"/>
    <property type="project" value="UniProtKB-UniRule"/>
</dbReference>
<dbReference type="FunFam" id="2.40.160.20:FF:000002">
    <property type="entry name" value="Lipid A palmitoyltransferase PagP"/>
    <property type="match status" value="1"/>
</dbReference>
<dbReference type="Gene3D" id="2.40.160.20">
    <property type="match status" value="1"/>
</dbReference>
<dbReference type="HAMAP" id="MF_00837">
    <property type="entry name" value="PagP_transferase"/>
    <property type="match status" value="1"/>
</dbReference>
<dbReference type="InterPro" id="IPR009746">
    <property type="entry name" value="LipidA_acyl_PagP"/>
</dbReference>
<dbReference type="InterPro" id="IPR011250">
    <property type="entry name" value="OMP/PagP_b-brl"/>
</dbReference>
<dbReference type="NCBIfam" id="NF008271">
    <property type="entry name" value="PRK11045.1"/>
    <property type="match status" value="1"/>
</dbReference>
<dbReference type="Pfam" id="PF07017">
    <property type="entry name" value="PagP"/>
    <property type="match status" value="1"/>
</dbReference>
<dbReference type="SUPFAM" id="SSF56925">
    <property type="entry name" value="OMPA-like"/>
    <property type="match status" value="1"/>
</dbReference>
<sequence>MRLFYQRISLLISLCGFFSAAWASDVQPASSTGLWQRFTQNVAETWHHSPHQDLYVPAITWHNRFTYDDEHIRRYNERPWGAGYGISRYDEKGNWHAIYLIAFKDSFNKWEPFGGYAWEKQWRPFDRYQDIHFGAGFTAGVTARDNWKYIPVPALLPLASVGYKQLTFQATYIPGTYNNGNVFFAWLRYRF</sequence>
<proteinExistence type="inferred from homology"/>
<gene>
    <name evidence="1" type="primary">pagP</name>
    <name type="ordered locus">SG1577</name>
</gene>
<comment type="function">
    <text evidence="1">Transfers a fatty acid residue from the sn-1 position of a phospholipid to the N-linked hydroxyfatty acid chain on the proximal unit of lipid A or its precursors.</text>
</comment>
<comment type="catalytic activity">
    <reaction evidence="1">
        <text>a lipid A + a 1,2-diacyl-sn-glycero-3-phosphocholine = a hepta-acyl lipid A + a 2-acyl-sn-glycero-3-phosphocholine</text>
        <dbReference type="Rhea" id="RHEA:74275"/>
        <dbReference type="ChEBI" id="CHEBI:57643"/>
        <dbReference type="ChEBI" id="CHEBI:57875"/>
        <dbReference type="ChEBI" id="CHEBI:193141"/>
        <dbReference type="ChEBI" id="CHEBI:193142"/>
        <dbReference type="EC" id="2.3.1.251"/>
    </reaction>
</comment>
<comment type="catalytic activity">
    <reaction evidence="1">
        <text>a lipid IVA + a 1,2-diacyl-sn-glycero-3-phosphocholine = a lipid IVB + a 2-acyl-sn-glycero-3-phosphocholine</text>
        <dbReference type="Rhea" id="RHEA:74279"/>
        <dbReference type="ChEBI" id="CHEBI:57643"/>
        <dbReference type="ChEBI" id="CHEBI:57875"/>
        <dbReference type="ChEBI" id="CHEBI:176425"/>
        <dbReference type="ChEBI" id="CHEBI:193143"/>
        <dbReference type="EC" id="2.3.1.251"/>
    </reaction>
</comment>
<comment type="catalytic activity">
    <reaction evidence="1">
        <text>a lipid IIA + a 1,2-diacyl-sn-glycero-3-phosphocholine = a lipid IIB + a 2-acyl-sn-glycero-3-phosphocholine</text>
        <dbReference type="Rhea" id="RHEA:74283"/>
        <dbReference type="ChEBI" id="CHEBI:57643"/>
        <dbReference type="ChEBI" id="CHEBI:57875"/>
        <dbReference type="ChEBI" id="CHEBI:193144"/>
        <dbReference type="ChEBI" id="CHEBI:193145"/>
        <dbReference type="EC" id="2.3.1.251"/>
    </reaction>
</comment>
<comment type="subunit">
    <text evidence="1">Homodimer.</text>
</comment>
<comment type="subcellular location">
    <subcellularLocation>
        <location evidence="1">Cell outer membrane</location>
    </subcellularLocation>
</comment>
<comment type="similarity">
    <text evidence="1">Belongs to the lipid A palmitoyltransferase family.</text>
</comment>
<reference key="1">
    <citation type="journal article" date="2006" name="Genome Res.">
        <title>Massive genome erosion and functional adaptations provide insights into the symbiotic lifestyle of Sodalis glossinidius in the tsetse host.</title>
        <authorList>
            <person name="Toh H."/>
            <person name="Weiss B.L."/>
            <person name="Perkin S.A.H."/>
            <person name="Yamashita A."/>
            <person name="Oshima K."/>
            <person name="Hattori M."/>
            <person name="Aksoy S."/>
        </authorList>
    </citation>
    <scope>NUCLEOTIDE SEQUENCE [LARGE SCALE GENOMIC DNA]</scope>
    <source>
        <strain>morsitans</strain>
    </source>
</reference>
<feature type="signal peptide" evidence="1">
    <location>
        <begin position="1"/>
        <end position="23"/>
    </location>
</feature>
<feature type="chain" id="PRO_0000414478" description="Lipid A acyltransferase PagP">
    <location>
        <begin position="24"/>
        <end position="191"/>
    </location>
</feature>
<feature type="active site" evidence="1">
    <location>
        <position position="62"/>
    </location>
</feature>
<feature type="active site" evidence="1">
    <location>
        <position position="105"/>
    </location>
</feature>
<feature type="active site" evidence="1">
    <location>
        <position position="106"/>
    </location>
</feature>
<feature type="site" description="Role in the phospholipid gating" evidence="1">
    <location>
        <position position="177"/>
    </location>
</feature>
<accession>Q2NSM3</accession>
<name>PAGP_SODGM</name>
<protein>
    <recommendedName>
        <fullName evidence="1">Lipid A acyltransferase PagP</fullName>
        <ecNumber evidence="1">2.3.1.251</ecNumber>
    </recommendedName>
    <alternativeName>
        <fullName evidence="1">Lipid A acylation protein</fullName>
    </alternativeName>
</protein>